<sequence>MAHKSHRHKALQAQLEAQPTISLISQKTRKPPAPSMDVDQDDDVLISTNAASAPNTTDPSDAPVSATTTSSGFAPLTAAAQSTVLKNEFRRIPIPPHRMTPLKRDWVNLYTPMVEMLGLQVRMNPQRKAVELKTSGHTVDSGAIQKGADFVKAYALGFDVNDALALLRLDDLYLDSFEIKDVKTLHGDHLARAIGRIAGEGGKVKFSIENASRTRIVLADTHIHILGSVQNIKIARDAVVSLILGSPPGKVYAHLKAVGARMKQRF</sequence>
<organism>
    <name type="scientific">Cryptococcus neoformans var. neoformans serotype D (strain B-3501A)</name>
    <name type="common">Filobasidiella neoformans</name>
    <dbReference type="NCBI Taxonomy" id="283643"/>
    <lineage>
        <taxon>Eukaryota</taxon>
        <taxon>Fungi</taxon>
        <taxon>Dikarya</taxon>
        <taxon>Basidiomycota</taxon>
        <taxon>Agaricomycotina</taxon>
        <taxon>Tremellomycetes</taxon>
        <taxon>Tremellales</taxon>
        <taxon>Cryptococcaceae</taxon>
        <taxon>Cryptococcus</taxon>
        <taxon>Cryptococcus neoformans species complex</taxon>
    </lineage>
</organism>
<protein>
    <recommendedName>
        <fullName>Pre-rRNA-processing protein PNO1</fullName>
    </recommendedName>
</protein>
<keyword id="KW-0963">Cytoplasm</keyword>
<keyword id="KW-0539">Nucleus</keyword>
<keyword id="KW-0690">Ribosome biogenesis</keyword>
<keyword id="KW-0694">RNA-binding</keyword>
<name>PNO1_CRYNB</name>
<accession>P0CO47</accession>
<accession>Q55ZC2</accession>
<accession>Q5KNN7</accession>
<reference key="1">
    <citation type="journal article" date="2005" name="Science">
        <title>The genome of the basidiomycetous yeast and human pathogen Cryptococcus neoformans.</title>
        <authorList>
            <person name="Loftus B.J."/>
            <person name="Fung E."/>
            <person name="Roncaglia P."/>
            <person name="Rowley D."/>
            <person name="Amedeo P."/>
            <person name="Bruno D."/>
            <person name="Vamathevan J."/>
            <person name="Miranda M."/>
            <person name="Anderson I.J."/>
            <person name="Fraser J.A."/>
            <person name="Allen J.E."/>
            <person name="Bosdet I.E."/>
            <person name="Brent M.R."/>
            <person name="Chiu R."/>
            <person name="Doering T.L."/>
            <person name="Donlin M.J."/>
            <person name="D'Souza C.A."/>
            <person name="Fox D.S."/>
            <person name="Grinberg V."/>
            <person name="Fu J."/>
            <person name="Fukushima M."/>
            <person name="Haas B.J."/>
            <person name="Huang J.C."/>
            <person name="Janbon G."/>
            <person name="Jones S.J.M."/>
            <person name="Koo H.L."/>
            <person name="Krzywinski M.I."/>
            <person name="Kwon-Chung K.J."/>
            <person name="Lengeler K.B."/>
            <person name="Maiti R."/>
            <person name="Marra M.A."/>
            <person name="Marra R.E."/>
            <person name="Mathewson C.A."/>
            <person name="Mitchell T.G."/>
            <person name="Pertea M."/>
            <person name="Riggs F.R."/>
            <person name="Salzberg S.L."/>
            <person name="Schein J.E."/>
            <person name="Shvartsbeyn A."/>
            <person name="Shin H."/>
            <person name="Shumway M."/>
            <person name="Specht C.A."/>
            <person name="Suh B.B."/>
            <person name="Tenney A."/>
            <person name="Utterback T.R."/>
            <person name="Wickes B.L."/>
            <person name="Wortman J.R."/>
            <person name="Wye N.H."/>
            <person name="Kronstad J.W."/>
            <person name="Lodge J.K."/>
            <person name="Heitman J."/>
            <person name="Davis R.W."/>
            <person name="Fraser C.M."/>
            <person name="Hyman R.W."/>
        </authorList>
    </citation>
    <scope>NUCLEOTIDE SEQUENCE [LARGE SCALE GENOMIC DNA]</scope>
    <source>
        <strain>B-3501A</strain>
    </source>
</reference>
<feature type="chain" id="PRO_0000410128" description="Pre-rRNA-processing protein PNO1">
    <location>
        <begin position="1"/>
        <end position="266"/>
    </location>
</feature>
<feature type="domain" description="KH">
    <location>
        <begin position="190"/>
        <end position="239"/>
    </location>
</feature>
<feature type="region of interest" description="Disordered" evidence="3">
    <location>
        <begin position="1"/>
        <end position="40"/>
    </location>
</feature>
<feature type="region of interest" description="Disordered" evidence="3">
    <location>
        <begin position="50"/>
        <end position="69"/>
    </location>
</feature>
<feature type="compositionally biased region" description="Basic residues" evidence="3">
    <location>
        <begin position="1"/>
        <end position="10"/>
    </location>
</feature>
<feature type="compositionally biased region" description="Polar residues" evidence="3">
    <location>
        <begin position="15"/>
        <end position="26"/>
    </location>
</feature>
<proteinExistence type="inferred from homology"/>
<dbReference type="EMBL" id="AAEY01000003">
    <property type="protein sequence ID" value="EAL23223.1"/>
    <property type="molecule type" value="Genomic_DNA"/>
</dbReference>
<dbReference type="RefSeq" id="XP_777870.1">
    <property type="nucleotide sequence ID" value="XM_772777.1"/>
</dbReference>
<dbReference type="SMR" id="P0CO47"/>
<dbReference type="EnsemblFungi" id="AAW41122">
    <property type="protein sequence ID" value="AAW41122"/>
    <property type="gene ID" value="CNA05860"/>
</dbReference>
<dbReference type="GeneID" id="4933831"/>
<dbReference type="KEGG" id="cnb:CNBA5670"/>
<dbReference type="VEuPathDB" id="FungiDB:CNBA5670"/>
<dbReference type="HOGENOM" id="CLU_064992_0_2_1"/>
<dbReference type="OrthoDB" id="5557at5206"/>
<dbReference type="GO" id="GO:0005737">
    <property type="term" value="C:cytoplasm"/>
    <property type="evidence" value="ECO:0007669"/>
    <property type="project" value="UniProtKB-SubCell"/>
</dbReference>
<dbReference type="GO" id="GO:0005730">
    <property type="term" value="C:nucleolus"/>
    <property type="evidence" value="ECO:0007669"/>
    <property type="project" value="UniProtKB-SubCell"/>
</dbReference>
<dbReference type="GO" id="GO:0042134">
    <property type="term" value="F:rRNA primary transcript binding"/>
    <property type="evidence" value="ECO:0007669"/>
    <property type="project" value="EnsemblFungi"/>
</dbReference>
<dbReference type="GO" id="GO:0051082">
    <property type="term" value="F:unfolded protein binding"/>
    <property type="evidence" value="ECO:0007669"/>
    <property type="project" value="EnsemblFungi"/>
</dbReference>
<dbReference type="GO" id="GO:0000447">
    <property type="term" value="P:endonucleolytic cleavage in ITS1 to separate SSU-rRNA from 5.8S rRNA and LSU-rRNA from tricistronic rRNA transcript (SSU-rRNA, 5.8S rRNA, LSU-rRNA)"/>
    <property type="evidence" value="ECO:0007669"/>
    <property type="project" value="EnsemblFungi"/>
</dbReference>
<dbReference type="GO" id="GO:0000472">
    <property type="term" value="P:endonucleolytic cleavage to generate mature 5'-end of SSU-rRNA from (SSU-rRNA, 5.8S rRNA, LSU-rRNA)"/>
    <property type="evidence" value="ECO:0007669"/>
    <property type="project" value="EnsemblFungi"/>
</dbReference>
<dbReference type="GO" id="GO:0043248">
    <property type="term" value="P:proteasome assembly"/>
    <property type="evidence" value="ECO:0007669"/>
    <property type="project" value="EnsemblFungi"/>
</dbReference>
<dbReference type="GO" id="GO:0000056">
    <property type="term" value="P:ribosomal small subunit export from nucleus"/>
    <property type="evidence" value="ECO:0007669"/>
    <property type="project" value="EnsemblFungi"/>
</dbReference>
<dbReference type="GO" id="GO:0042255">
    <property type="term" value="P:ribosome assembly"/>
    <property type="evidence" value="ECO:0007669"/>
    <property type="project" value="EnsemblFungi"/>
</dbReference>
<dbReference type="CDD" id="cd22391">
    <property type="entry name" value="KH-I_PNO1_rpt1"/>
    <property type="match status" value="1"/>
</dbReference>
<dbReference type="CDD" id="cd22392">
    <property type="entry name" value="KH-I_PNO1_rpt2"/>
    <property type="match status" value="1"/>
</dbReference>
<dbReference type="FunFam" id="3.30.1370.10:FF:000009">
    <property type="entry name" value="RNA-binding protein PNO1"/>
    <property type="match status" value="1"/>
</dbReference>
<dbReference type="Gene3D" id="3.30.1370.10">
    <property type="entry name" value="K Homology domain, type 1"/>
    <property type="match status" value="1"/>
</dbReference>
<dbReference type="InterPro" id="IPR055212">
    <property type="entry name" value="KH-I_PNO1_first"/>
</dbReference>
<dbReference type="InterPro" id="IPR036612">
    <property type="entry name" value="KH_dom_type_1_sf"/>
</dbReference>
<dbReference type="InterPro" id="IPR055211">
    <property type="entry name" value="KH_PNO1_2nd"/>
</dbReference>
<dbReference type="PANTHER" id="PTHR12826">
    <property type="entry name" value="RIBONUCLEASE Y"/>
    <property type="match status" value="1"/>
</dbReference>
<dbReference type="PANTHER" id="PTHR12826:SF13">
    <property type="entry name" value="RNA-BINDING PROTEIN PNO1"/>
    <property type="match status" value="1"/>
</dbReference>
<dbReference type="Pfam" id="PF22891">
    <property type="entry name" value="KH_PNO1_2nd"/>
    <property type="match status" value="1"/>
</dbReference>
<dbReference type="SUPFAM" id="SSF54791">
    <property type="entry name" value="Eukaryotic type KH-domain (KH-domain type I)"/>
    <property type="match status" value="1"/>
</dbReference>
<evidence type="ECO:0000250" key="1"/>
<evidence type="ECO:0000250" key="2">
    <source>
        <dbReference type="UniProtKB" id="Q99216"/>
    </source>
</evidence>
<evidence type="ECO:0000256" key="3">
    <source>
        <dbReference type="SAM" id="MobiDB-lite"/>
    </source>
</evidence>
<evidence type="ECO:0000305" key="4"/>
<gene>
    <name type="primary">PNO1</name>
    <name type="ordered locus">CNBA5670</name>
</gene>
<comment type="function">
    <text evidence="1">Required for small ribosomal subunit (SSU) synthesis. Has a role in the processing of early nucleolar and late cytoplasmic pre-RNA species (By similarity).</text>
</comment>
<comment type="subunit">
    <text evidence="1">Component of the small ribosomal subunit, ribosomal RNA processing complex (SSU RRP complex).</text>
</comment>
<comment type="subcellular location">
    <subcellularLocation>
        <location evidence="2">Cytoplasm</location>
    </subcellularLocation>
    <subcellularLocation>
        <location evidence="2">Nucleus</location>
        <location evidence="2">Nucleolus</location>
    </subcellularLocation>
</comment>
<comment type="similarity">
    <text evidence="4">Belongs to the PNO1 family.</text>
</comment>